<accession>Q8RAN4</accession>
<evidence type="ECO:0000255" key="1">
    <source>
        <dbReference type="HAMAP-Rule" id="MF_00034"/>
    </source>
</evidence>
<protein>
    <recommendedName>
        <fullName evidence="1">Crossover junction endodeoxyribonuclease RuvC</fullName>
        <ecNumber evidence="1">3.1.21.10</ecNumber>
    </recommendedName>
    <alternativeName>
        <fullName evidence="1">Holliday junction nuclease RuvC</fullName>
    </alternativeName>
    <alternativeName>
        <fullName evidence="1">Holliday junction resolvase RuvC</fullName>
    </alternativeName>
</protein>
<name>RUVC_CALS4</name>
<proteinExistence type="inferred from homology"/>
<reference key="1">
    <citation type="journal article" date="2002" name="Genome Res.">
        <title>A complete sequence of the T. tengcongensis genome.</title>
        <authorList>
            <person name="Bao Q."/>
            <person name="Tian Y."/>
            <person name="Li W."/>
            <person name="Xu Z."/>
            <person name="Xuan Z."/>
            <person name="Hu S."/>
            <person name="Dong W."/>
            <person name="Yang J."/>
            <person name="Chen Y."/>
            <person name="Xue Y."/>
            <person name="Xu Y."/>
            <person name="Lai X."/>
            <person name="Huang L."/>
            <person name="Dong X."/>
            <person name="Ma Y."/>
            <person name="Ling L."/>
            <person name="Tan H."/>
            <person name="Chen R."/>
            <person name="Wang J."/>
            <person name="Yu J."/>
            <person name="Yang H."/>
        </authorList>
    </citation>
    <scope>NUCLEOTIDE SEQUENCE [LARGE SCALE GENOMIC DNA]</scope>
    <source>
        <strain>DSM 15242 / JCM 11007 / NBRC 100824 / MB4</strain>
    </source>
</reference>
<comment type="function">
    <text evidence="1">The RuvA-RuvB-RuvC complex processes Holliday junction (HJ) DNA during genetic recombination and DNA repair. Endonuclease that resolves HJ intermediates. Cleaves cruciform DNA by making single-stranded nicks across the HJ at symmetrical positions within the homologous arms, yielding a 5'-phosphate and a 3'-hydroxyl group; requires a central core of homology in the junction. The consensus cleavage sequence is 5'-(A/T)TT(C/G)-3'. Cleavage occurs on the 3'-side of the TT dinucleotide at the point of strand exchange. HJ branch migration catalyzed by RuvA-RuvB allows RuvC to scan DNA until it finds its consensus sequence, where it cleaves and resolves the cruciform DNA.</text>
</comment>
<comment type="catalytic activity">
    <reaction evidence="1">
        <text>Endonucleolytic cleavage at a junction such as a reciprocal single-stranded crossover between two homologous DNA duplexes (Holliday junction).</text>
        <dbReference type="EC" id="3.1.21.10"/>
    </reaction>
</comment>
<comment type="cofactor">
    <cofactor evidence="1">
        <name>Mg(2+)</name>
        <dbReference type="ChEBI" id="CHEBI:18420"/>
    </cofactor>
    <text evidence="1">Binds 2 Mg(2+) ion per subunit.</text>
</comment>
<comment type="subunit">
    <text evidence="1">Homodimer which binds Holliday junction (HJ) DNA. The HJ becomes 2-fold symmetrical on binding to RuvC with unstacked arms; it has a different conformation from HJ DNA in complex with RuvA. In the full resolvosome a probable DNA-RuvA(4)-RuvB(12)-RuvC(2) complex forms which resolves the HJ.</text>
</comment>
<comment type="subcellular location">
    <subcellularLocation>
        <location evidence="1">Cytoplasm</location>
    </subcellularLocation>
</comment>
<comment type="similarity">
    <text evidence="1">Belongs to the RuvC family.</text>
</comment>
<keyword id="KW-0963">Cytoplasm</keyword>
<keyword id="KW-0227">DNA damage</keyword>
<keyword id="KW-0233">DNA recombination</keyword>
<keyword id="KW-0234">DNA repair</keyword>
<keyword id="KW-0238">DNA-binding</keyword>
<keyword id="KW-0255">Endonuclease</keyword>
<keyword id="KW-0378">Hydrolase</keyword>
<keyword id="KW-0460">Magnesium</keyword>
<keyword id="KW-0479">Metal-binding</keyword>
<keyword id="KW-0540">Nuclease</keyword>
<keyword id="KW-1185">Reference proteome</keyword>
<dbReference type="EC" id="3.1.21.10" evidence="1"/>
<dbReference type="EMBL" id="AE008691">
    <property type="protein sequence ID" value="AAM24409.1"/>
    <property type="molecule type" value="Genomic_DNA"/>
</dbReference>
<dbReference type="RefSeq" id="WP_011025514.1">
    <property type="nucleotide sequence ID" value="NC_003869.1"/>
</dbReference>
<dbReference type="SMR" id="Q8RAN4"/>
<dbReference type="STRING" id="273068.TTE1178"/>
<dbReference type="KEGG" id="tte:TTE1178"/>
<dbReference type="eggNOG" id="COG0817">
    <property type="taxonomic scope" value="Bacteria"/>
</dbReference>
<dbReference type="HOGENOM" id="CLU_091257_3_1_9"/>
<dbReference type="OrthoDB" id="9805499at2"/>
<dbReference type="Proteomes" id="UP000000555">
    <property type="component" value="Chromosome"/>
</dbReference>
<dbReference type="GO" id="GO:0005737">
    <property type="term" value="C:cytoplasm"/>
    <property type="evidence" value="ECO:0007669"/>
    <property type="project" value="UniProtKB-SubCell"/>
</dbReference>
<dbReference type="GO" id="GO:0048476">
    <property type="term" value="C:Holliday junction resolvase complex"/>
    <property type="evidence" value="ECO:0007669"/>
    <property type="project" value="UniProtKB-UniRule"/>
</dbReference>
<dbReference type="GO" id="GO:0008821">
    <property type="term" value="F:crossover junction DNA endonuclease activity"/>
    <property type="evidence" value="ECO:0007669"/>
    <property type="project" value="UniProtKB-UniRule"/>
</dbReference>
<dbReference type="GO" id="GO:0003677">
    <property type="term" value="F:DNA binding"/>
    <property type="evidence" value="ECO:0007669"/>
    <property type="project" value="UniProtKB-KW"/>
</dbReference>
<dbReference type="GO" id="GO:0000287">
    <property type="term" value="F:magnesium ion binding"/>
    <property type="evidence" value="ECO:0007669"/>
    <property type="project" value="UniProtKB-UniRule"/>
</dbReference>
<dbReference type="GO" id="GO:0006310">
    <property type="term" value="P:DNA recombination"/>
    <property type="evidence" value="ECO:0007669"/>
    <property type="project" value="UniProtKB-UniRule"/>
</dbReference>
<dbReference type="GO" id="GO:0006281">
    <property type="term" value="P:DNA repair"/>
    <property type="evidence" value="ECO:0007669"/>
    <property type="project" value="UniProtKB-UniRule"/>
</dbReference>
<dbReference type="CDD" id="cd16962">
    <property type="entry name" value="RuvC"/>
    <property type="match status" value="1"/>
</dbReference>
<dbReference type="FunFam" id="3.30.420.10:FF:000002">
    <property type="entry name" value="Crossover junction endodeoxyribonuclease RuvC"/>
    <property type="match status" value="1"/>
</dbReference>
<dbReference type="Gene3D" id="3.30.420.10">
    <property type="entry name" value="Ribonuclease H-like superfamily/Ribonuclease H"/>
    <property type="match status" value="1"/>
</dbReference>
<dbReference type="HAMAP" id="MF_00034">
    <property type="entry name" value="RuvC"/>
    <property type="match status" value="1"/>
</dbReference>
<dbReference type="InterPro" id="IPR012337">
    <property type="entry name" value="RNaseH-like_sf"/>
</dbReference>
<dbReference type="InterPro" id="IPR036397">
    <property type="entry name" value="RNaseH_sf"/>
</dbReference>
<dbReference type="InterPro" id="IPR020563">
    <property type="entry name" value="X-over_junc_endoDNase_Mg_BS"/>
</dbReference>
<dbReference type="InterPro" id="IPR002176">
    <property type="entry name" value="X-over_junc_endoDNase_RuvC"/>
</dbReference>
<dbReference type="NCBIfam" id="NF000711">
    <property type="entry name" value="PRK00039.2-1"/>
    <property type="match status" value="1"/>
</dbReference>
<dbReference type="NCBIfam" id="TIGR00228">
    <property type="entry name" value="ruvC"/>
    <property type="match status" value="1"/>
</dbReference>
<dbReference type="PANTHER" id="PTHR30194">
    <property type="entry name" value="CROSSOVER JUNCTION ENDODEOXYRIBONUCLEASE RUVC"/>
    <property type="match status" value="1"/>
</dbReference>
<dbReference type="PANTHER" id="PTHR30194:SF3">
    <property type="entry name" value="CROSSOVER JUNCTION ENDODEOXYRIBONUCLEASE RUVC"/>
    <property type="match status" value="1"/>
</dbReference>
<dbReference type="Pfam" id="PF02075">
    <property type="entry name" value="RuvC"/>
    <property type="match status" value="1"/>
</dbReference>
<dbReference type="PRINTS" id="PR00696">
    <property type="entry name" value="RSOLVASERUVC"/>
</dbReference>
<dbReference type="SUPFAM" id="SSF53098">
    <property type="entry name" value="Ribonuclease H-like"/>
    <property type="match status" value="1"/>
</dbReference>
<dbReference type="PROSITE" id="PS01321">
    <property type="entry name" value="RUVC"/>
    <property type="match status" value="1"/>
</dbReference>
<gene>
    <name evidence="1" type="primary">ruvC</name>
    <name type="ordered locus">TTE1178</name>
</gene>
<sequence length="165" mass="18267">MRVLGIDPGIATLGYGVVEYKNNKFSPIVYGAITTDAGVDKAFRLYTLYKGLEDIIKLYRPEIVAIEELFYNKNSKTVITIGEVRGISILAAVNSGVKVYEYTPLQVKQAVVGYGRAEKQQVQQMVKVLLNLDEIPKPDDVADALAVAICHCHSNNMLERLGYGR</sequence>
<feature type="chain" id="PRO_0000183140" description="Crossover junction endodeoxyribonuclease RuvC">
    <location>
        <begin position="1"/>
        <end position="165"/>
    </location>
</feature>
<feature type="active site" evidence="1">
    <location>
        <position position="7"/>
    </location>
</feature>
<feature type="active site" evidence="1">
    <location>
        <position position="67"/>
    </location>
</feature>
<feature type="active site" evidence="1">
    <location>
        <position position="140"/>
    </location>
</feature>
<feature type="binding site" evidence="1">
    <location>
        <position position="7"/>
    </location>
    <ligand>
        <name>Mg(2+)</name>
        <dbReference type="ChEBI" id="CHEBI:18420"/>
        <label>1</label>
    </ligand>
</feature>
<feature type="binding site" evidence="1">
    <location>
        <position position="67"/>
    </location>
    <ligand>
        <name>Mg(2+)</name>
        <dbReference type="ChEBI" id="CHEBI:18420"/>
        <label>2</label>
    </ligand>
</feature>
<feature type="binding site" evidence="1">
    <location>
        <position position="140"/>
    </location>
    <ligand>
        <name>Mg(2+)</name>
        <dbReference type="ChEBI" id="CHEBI:18420"/>
        <label>1</label>
    </ligand>
</feature>
<organism>
    <name type="scientific">Caldanaerobacter subterraneus subsp. tengcongensis (strain DSM 15242 / JCM 11007 / NBRC 100824 / MB4)</name>
    <name type="common">Thermoanaerobacter tengcongensis</name>
    <dbReference type="NCBI Taxonomy" id="273068"/>
    <lineage>
        <taxon>Bacteria</taxon>
        <taxon>Bacillati</taxon>
        <taxon>Bacillota</taxon>
        <taxon>Clostridia</taxon>
        <taxon>Thermoanaerobacterales</taxon>
        <taxon>Thermoanaerobacteraceae</taxon>
        <taxon>Caldanaerobacter</taxon>
    </lineage>
</organism>